<evidence type="ECO:0000250" key="1"/>
<evidence type="ECO:0000255" key="2"/>
<evidence type="ECO:0000255" key="3">
    <source>
        <dbReference type="PROSITE-ProRule" id="PRU10052"/>
    </source>
</evidence>
<evidence type="ECO:0000305" key="4"/>
<dbReference type="EC" id="3.2.1.15"/>
<dbReference type="EMBL" id="AM269993">
    <property type="protein sequence ID" value="CAK44164.1"/>
    <property type="molecule type" value="Genomic_DNA"/>
</dbReference>
<dbReference type="RefSeq" id="XP_001389855.1">
    <property type="nucleotide sequence ID" value="XM_001389818.2"/>
</dbReference>
<dbReference type="SMR" id="A2QBB6"/>
<dbReference type="CAZy" id="GH28">
    <property type="family name" value="Glycoside Hydrolase Family 28"/>
</dbReference>
<dbReference type="GlyCosmos" id="A2QBB6">
    <property type="glycosylation" value="1 site, No reported glycans"/>
</dbReference>
<dbReference type="EnsemblFungi" id="CAK44164">
    <property type="protein sequence ID" value="CAK44164"/>
    <property type="gene ID" value="An01g14670"/>
</dbReference>
<dbReference type="GeneID" id="4977284"/>
<dbReference type="KEGG" id="ang:An01g14670"/>
<dbReference type="VEuPathDB" id="FungiDB:An01g14670"/>
<dbReference type="HOGENOM" id="CLU_040116_0_0_1"/>
<dbReference type="Proteomes" id="UP000006706">
    <property type="component" value="Chromosome 2R"/>
</dbReference>
<dbReference type="GO" id="GO:0005576">
    <property type="term" value="C:extracellular region"/>
    <property type="evidence" value="ECO:0000250"/>
    <property type="project" value="UniProtKB"/>
</dbReference>
<dbReference type="GO" id="GO:0004650">
    <property type="term" value="F:polygalacturonase activity"/>
    <property type="evidence" value="ECO:0000250"/>
    <property type="project" value="UniProtKB"/>
</dbReference>
<dbReference type="GO" id="GO:0071555">
    <property type="term" value="P:cell wall organization"/>
    <property type="evidence" value="ECO:0007669"/>
    <property type="project" value="UniProtKB-KW"/>
</dbReference>
<dbReference type="GO" id="GO:0045490">
    <property type="term" value="P:pectin catabolic process"/>
    <property type="evidence" value="ECO:0000250"/>
    <property type="project" value="UniProtKB"/>
</dbReference>
<dbReference type="FunFam" id="2.160.20.10:FF:000002">
    <property type="entry name" value="Endopolygalacturonase D"/>
    <property type="match status" value="1"/>
</dbReference>
<dbReference type="Gene3D" id="2.160.20.10">
    <property type="entry name" value="Single-stranded right-handed beta-helix, Pectin lyase-like"/>
    <property type="match status" value="1"/>
</dbReference>
<dbReference type="InterPro" id="IPR000743">
    <property type="entry name" value="Glyco_hydro_28"/>
</dbReference>
<dbReference type="InterPro" id="IPR050434">
    <property type="entry name" value="Glycosyl_hydrlase_28"/>
</dbReference>
<dbReference type="InterPro" id="IPR006626">
    <property type="entry name" value="PbH1"/>
</dbReference>
<dbReference type="InterPro" id="IPR012334">
    <property type="entry name" value="Pectin_lyas_fold"/>
</dbReference>
<dbReference type="InterPro" id="IPR011050">
    <property type="entry name" value="Pectin_lyase_fold/virulence"/>
</dbReference>
<dbReference type="PANTHER" id="PTHR31884">
    <property type="entry name" value="POLYGALACTURONASE"/>
    <property type="match status" value="1"/>
</dbReference>
<dbReference type="PANTHER" id="PTHR31884:SF1">
    <property type="entry name" value="POLYGALACTURONASE"/>
    <property type="match status" value="1"/>
</dbReference>
<dbReference type="Pfam" id="PF00295">
    <property type="entry name" value="Glyco_hydro_28"/>
    <property type="match status" value="1"/>
</dbReference>
<dbReference type="SMART" id="SM00710">
    <property type="entry name" value="PbH1"/>
    <property type="match status" value="6"/>
</dbReference>
<dbReference type="SUPFAM" id="SSF51126">
    <property type="entry name" value="Pectin lyase-like"/>
    <property type="match status" value="1"/>
</dbReference>
<dbReference type="PROSITE" id="PS00502">
    <property type="entry name" value="POLYGALACTURONASE"/>
    <property type="match status" value="1"/>
</dbReference>
<reference key="1">
    <citation type="journal article" date="2007" name="Nat. Biotechnol.">
        <title>Genome sequencing and analysis of the versatile cell factory Aspergillus niger CBS 513.88.</title>
        <authorList>
            <person name="Pel H.J."/>
            <person name="de Winde J.H."/>
            <person name="Archer D.B."/>
            <person name="Dyer P.S."/>
            <person name="Hofmann G."/>
            <person name="Schaap P.J."/>
            <person name="Turner G."/>
            <person name="de Vries R.P."/>
            <person name="Albang R."/>
            <person name="Albermann K."/>
            <person name="Andersen M.R."/>
            <person name="Bendtsen J.D."/>
            <person name="Benen J.A.E."/>
            <person name="van den Berg M."/>
            <person name="Breestraat S."/>
            <person name="Caddick M.X."/>
            <person name="Contreras R."/>
            <person name="Cornell M."/>
            <person name="Coutinho P.M."/>
            <person name="Danchin E.G.J."/>
            <person name="Debets A.J.M."/>
            <person name="Dekker P."/>
            <person name="van Dijck P.W.M."/>
            <person name="van Dijk A."/>
            <person name="Dijkhuizen L."/>
            <person name="Driessen A.J.M."/>
            <person name="d'Enfert C."/>
            <person name="Geysens S."/>
            <person name="Goosen C."/>
            <person name="Groot G.S.P."/>
            <person name="de Groot P.W.J."/>
            <person name="Guillemette T."/>
            <person name="Henrissat B."/>
            <person name="Herweijer M."/>
            <person name="van den Hombergh J.P.T.W."/>
            <person name="van den Hondel C.A.M.J.J."/>
            <person name="van der Heijden R.T.J.M."/>
            <person name="van der Kaaij R.M."/>
            <person name="Klis F.M."/>
            <person name="Kools H.J."/>
            <person name="Kubicek C.P."/>
            <person name="van Kuyk P.A."/>
            <person name="Lauber J."/>
            <person name="Lu X."/>
            <person name="van der Maarel M.J.E.C."/>
            <person name="Meulenberg R."/>
            <person name="Menke H."/>
            <person name="Mortimer M.A."/>
            <person name="Nielsen J."/>
            <person name="Oliver S.G."/>
            <person name="Olsthoorn M."/>
            <person name="Pal K."/>
            <person name="van Peij N.N.M.E."/>
            <person name="Ram A.F.J."/>
            <person name="Rinas U."/>
            <person name="Roubos J.A."/>
            <person name="Sagt C.M.J."/>
            <person name="Schmoll M."/>
            <person name="Sun J."/>
            <person name="Ussery D."/>
            <person name="Varga J."/>
            <person name="Vervecken W."/>
            <person name="van de Vondervoort P.J.J."/>
            <person name="Wedler H."/>
            <person name="Woesten H.A.B."/>
            <person name="Zeng A.-P."/>
            <person name="van Ooyen A.J.J."/>
            <person name="Visser J."/>
            <person name="Stam H."/>
        </authorList>
    </citation>
    <scope>NUCLEOTIDE SEQUENCE [LARGE SCALE GENOMIC DNA]</scope>
    <source>
        <strain>ATCC MYA-4892 / CBS 513.88 / FGSC A1513</strain>
    </source>
</reference>
<comment type="function">
    <text evidence="1">Involved in maceration and soft-rotting of plant tissue. Hydrolyzes the 1,4-alpha glycosidic bonds of de-esterified pectate in the smooth region of the plant cell wall (By similarity).</text>
</comment>
<comment type="catalytic activity">
    <reaction>
        <text>(1,4-alpha-D-galacturonosyl)n+m + H2O = (1,4-alpha-D-galacturonosyl)n + (1,4-alpha-D-galacturonosyl)m.</text>
        <dbReference type="EC" id="3.2.1.15"/>
    </reaction>
</comment>
<comment type="subcellular location">
    <subcellularLocation>
        <location evidence="1">Secreted</location>
    </subcellularLocation>
</comment>
<comment type="similarity">
    <text evidence="4">Belongs to the glycosyl hydrolase 28 family.</text>
</comment>
<organism>
    <name type="scientific">Aspergillus niger (strain ATCC MYA-4892 / CBS 513.88 / FGSC A1513)</name>
    <dbReference type="NCBI Taxonomy" id="425011"/>
    <lineage>
        <taxon>Eukaryota</taxon>
        <taxon>Fungi</taxon>
        <taxon>Dikarya</taxon>
        <taxon>Ascomycota</taxon>
        <taxon>Pezizomycotina</taxon>
        <taxon>Eurotiomycetes</taxon>
        <taxon>Eurotiomycetidae</taxon>
        <taxon>Eurotiales</taxon>
        <taxon>Aspergillaceae</taxon>
        <taxon>Aspergillus</taxon>
        <taxon>Aspergillus subgen. Circumdati</taxon>
    </lineage>
</organism>
<protein>
    <recommendedName>
        <fullName>Probable endopolygalacturonase E</fullName>
        <shortName>PGE</shortName>
        <ecNumber>3.2.1.15</ecNumber>
    </recommendedName>
    <alternativeName>
        <fullName>Pectinase 4</fullName>
    </alternativeName>
    <alternativeName>
        <fullName>Pectinase E</fullName>
    </alternativeName>
    <alternativeName>
        <fullName>Polygalacturonase E</fullName>
    </alternativeName>
    <alternativeName>
        <fullName>Polygalacturonase IV</fullName>
        <shortName>PG-IV</shortName>
    </alternativeName>
</protein>
<name>PGLRE_ASPNC</name>
<sequence length="378" mass="39631">MVTSSSVIVLTLWAALVSASPVADPLVTPAPKLEDLEKRATSCTFSGSEGASSASKSKTSCSTIVLSDVAVPSGTTLDLTDLNDGTHVIFEGETTFGYEEWSGPLVSVSGTDITVTGADGAYLNGDGSRWWDGEGSNGGKTKPKFFYAHDLTSSTISGIYIQNSPVQVFSIDGSTYLTMEDITIDNTDGDDGEAANTDGFDIGDSTYITITGANVYNQDDCVAVNSGENIYFSGGVCSGGHGLSIGSVGGRSDNTVKNVTFYDSEIKSSQNGVRIKTIYGDTGSVSEVTYKEITLSDITDYGIVVEQNYDDTSKSPTDGITIEDFVLDNVQGSVESSGTNIYIVCGSDSCTDWTWTDVDVSGGKTSSDCENVPDDISC</sequence>
<gene>
    <name type="primary">pgaE</name>
    <name type="ORF">An01g14670</name>
</gene>
<keyword id="KW-0961">Cell wall biogenesis/degradation</keyword>
<keyword id="KW-1015">Disulfide bond</keyword>
<keyword id="KW-0325">Glycoprotein</keyword>
<keyword id="KW-0326">Glycosidase</keyword>
<keyword id="KW-0378">Hydrolase</keyword>
<keyword id="KW-1185">Reference proteome</keyword>
<keyword id="KW-0677">Repeat</keyword>
<keyword id="KW-0964">Secreted</keyword>
<keyword id="KW-0732">Signal</keyword>
<keyword id="KW-0865">Zymogen</keyword>
<feature type="signal peptide" evidence="2">
    <location>
        <begin position="1"/>
        <end position="19"/>
    </location>
</feature>
<feature type="propeptide" id="PRO_0000393665" evidence="2">
    <location>
        <begin position="20"/>
        <end position="38"/>
    </location>
</feature>
<feature type="chain" id="PRO_5000219495" description="Probable endopolygalacturonase E">
    <location>
        <begin position="39"/>
        <end position="378"/>
    </location>
</feature>
<feature type="repeat" description="PbH1 1">
    <location>
        <begin position="103"/>
        <end position="125"/>
    </location>
</feature>
<feature type="repeat" description="PbH1 2">
    <location>
        <begin position="174"/>
        <end position="204"/>
    </location>
</feature>
<feature type="repeat" description="PbH1 3">
    <location>
        <begin position="205"/>
        <end position="226"/>
    </location>
</feature>
<feature type="repeat" description="PbH1 4">
    <location>
        <begin position="256"/>
        <end position="277"/>
    </location>
</feature>
<feature type="repeat" description="PbH1 5">
    <location>
        <begin position="285"/>
        <end position="307"/>
    </location>
</feature>
<feature type="repeat" description="PbH1 6">
    <location>
        <begin position="317"/>
        <end position="345"/>
    </location>
</feature>
<feature type="active site" description="Proton donor" evidence="3">
    <location>
        <position position="219"/>
    </location>
</feature>
<feature type="active site" evidence="3">
    <location>
        <position position="241"/>
    </location>
</feature>
<feature type="glycosylation site" description="N-linked (GlcNAc...) asparagine" evidence="2">
    <location>
        <position position="258"/>
    </location>
</feature>
<feature type="disulfide bond" evidence="1">
    <location>
        <begin position="43"/>
        <end position="61"/>
    </location>
</feature>
<feature type="disulfide bond" evidence="1">
    <location>
        <begin position="221"/>
        <end position="237"/>
    </location>
</feature>
<feature type="disulfide bond" evidence="1">
    <location>
        <begin position="345"/>
        <end position="350"/>
    </location>
</feature>
<feature type="disulfide bond" evidence="1">
    <location>
        <begin position="369"/>
        <end position="378"/>
    </location>
</feature>
<proteinExistence type="inferred from homology"/>
<accession>A2QBB6</accession>